<accession>Q8Z7D5</accession>
<accession>Q83T23</accession>
<proteinExistence type="inferred from homology"/>
<name>RLUB_SALTI</name>
<sequence length="291" mass="32646">MSEKLQKVLARAGHGSRREIESIIEAGRVSVDGKIATLGDRVEVTPGLKIRIDGHLISVKESAEQICRVLAYYKPEGELCTRNDPEGRPTVFDRLPKLRGARWIAVGRLDVNTCGLLLFTTDGELANRLMHPSREVEREYAVRVFGQVDESKLRDLSRGVQLEDGPAAFKTIKFSGGEGINQWYNVTLTEGRNREVRRLWEAVGVQVSRLIRVRYGDIPLPKGLPRGGWTELDFAQTNYLRGLVELPPETSSKVAVEKDRRRMKANQIRRAVKRHSQIAGGRRSGGRNNNG</sequence>
<keyword id="KW-0413">Isomerase</keyword>
<keyword id="KW-0694">RNA-binding</keyword>
<keyword id="KW-0698">rRNA processing</keyword>
<gene>
    <name type="primary">rluB</name>
    <name type="ordered locus">STY1331</name>
    <name type="ordered locus">t1632</name>
</gene>
<organism>
    <name type="scientific">Salmonella typhi</name>
    <dbReference type="NCBI Taxonomy" id="90370"/>
    <lineage>
        <taxon>Bacteria</taxon>
        <taxon>Pseudomonadati</taxon>
        <taxon>Pseudomonadota</taxon>
        <taxon>Gammaproteobacteria</taxon>
        <taxon>Enterobacterales</taxon>
        <taxon>Enterobacteriaceae</taxon>
        <taxon>Salmonella</taxon>
    </lineage>
</organism>
<comment type="function">
    <text evidence="1">Responsible for synthesis of pseudouridine from uracil-2605 in 23S ribosomal RNA.</text>
</comment>
<comment type="catalytic activity">
    <reaction>
        <text>uridine(2605) in 23S rRNA = pseudouridine(2605) in 23S rRNA</text>
        <dbReference type="Rhea" id="RHEA:42520"/>
        <dbReference type="Rhea" id="RHEA-COMP:10095"/>
        <dbReference type="Rhea" id="RHEA-COMP:10096"/>
        <dbReference type="ChEBI" id="CHEBI:65314"/>
        <dbReference type="ChEBI" id="CHEBI:65315"/>
        <dbReference type="EC" id="5.4.99.22"/>
    </reaction>
</comment>
<comment type="similarity">
    <text evidence="4">Belongs to the pseudouridine synthase RsuA family.</text>
</comment>
<feature type="chain" id="PRO_0000099989" description="Ribosomal large subunit pseudouridine synthase B">
    <location>
        <begin position="1"/>
        <end position="291"/>
    </location>
</feature>
<feature type="domain" description="S4 RNA-binding" evidence="2">
    <location>
        <begin position="3"/>
        <end position="63"/>
    </location>
</feature>
<feature type="region of interest" description="Disordered" evidence="3">
    <location>
        <begin position="272"/>
        <end position="291"/>
    </location>
</feature>
<feature type="active site" description="Nucleophile" evidence="1">
    <location>
        <position position="110"/>
    </location>
</feature>
<feature type="sequence conflict" description="In Ref. 2; AAO69259." evidence="4" ref="2">
    <original>F</original>
    <variation>L</variation>
    <location>
        <position position="234"/>
    </location>
</feature>
<evidence type="ECO:0000250" key="1"/>
<evidence type="ECO:0000255" key="2">
    <source>
        <dbReference type="PROSITE-ProRule" id="PRU00182"/>
    </source>
</evidence>
<evidence type="ECO:0000256" key="3">
    <source>
        <dbReference type="SAM" id="MobiDB-lite"/>
    </source>
</evidence>
<evidence type="ECO:0000305" key="4"/>
<dbReference type="EC" id="5.4.99.22"/>
<dbReference type="EMBL" id="AL513382">
    <property type="protein sequence ID" value="CAD08412.1"/>
    <property type="molecule type" value="Genomic_DNA"/>
</dbReference>
<dbReference type="EMBL" id="AE014613">
    <property type="protein sequence ID" value="AAO69259.1"/>
    <property type="molecule type" value="Genomic_DNA"/>
</dbReference>
<dbReference type="RefSeq" id="NP_455778.1">
    <property type="nucleotide sequence ID" value="NC_003198.1"/>
</dbReference>
<dbReference type="RefSeq" id="WP_001291232.1">
    <property type="nucleotide sequence ID" value="NZ_PZMG01000018.1"/>
</dbReference>
<dbReference type="SMR" id="Q8Z7D5"/>
<dbReference type="STRING" id="220341.gene:17585292"/>
<dbReference type="KEGG" id="stt:t1632"/>
<dbReference type="KEGG" id="sty:STY1331"/>
<dbReference type="PATRIC" id="fig|220341.7.peg.1338"/>
<dbReference type="eggNOG" id="COG1187">
    <property type="taxonomic scope" value="Bacteria"/>
</dbReference>
<dbReference type="HOGENOM" id="CLU_024979_1_1_6"/>
<dbReference type="OMA" id="EWINNGW"/>
<dbReference type="Proteomes" id="UP000000541">
    <property type="component" value="Chromosome"/>
</dbReference>
<dbReference type="Proteomes" id="UP000002670">
    <property type="component" value="Chromosome"/>
</dbReference>
<dbReference type="GO" id="GO:0160139">
    <property type="term" value="F:23S rRNA pseudouridine(2605) synthase activity"/>
    <property type="evidence" value="ECO:0007669"/>
    <property type="project" value="UniProtKB-EC"/>
</dbReference>
<dbReference type="GO" id="GO:0003723">
    <property type="term" value="F:RNA binding"/>
    <property type="evidence" value="ECO:0007669"/>
    <property type="project" value="UniProtKB-KW"/>
</dbReference>
<dbReference type="GO" id="GO:0000455">
    <property type="term" value="P:enzyme-directed rRNA pseudouridine synthesis"/>
    <property type="evidence" value="ECO:0007669"/>
    <property type="project" value="UniProtKB-ARBA"/>
</dbReference>
<dbReference type="CDD" id="cd02556">
    <property type="entry name" value="PseudoU_synth_RluB"/>
    <property type="match status" value="1"/>
</dbReference>
<dbReference type="CDD" id="cd00165">
    <property type="entry name" value="S4"/>
    <property type="match status" value="1"/>
</dbReference>
<dbReference type="FunFam" id="3.10.290.10:FF:000003">
    <property type="entry name" value="Pseudouridine synthase"/>
    <property type="match status" value="1"/>
</dbReference>
<dbReference type="FunFam" id="3.30.2350.10:FF:000002">
    <property type="entry name" value="Pseudouridine synthase"/>
    <property type="match status" value="1"/>
</dbReference>
<dbReference type="FunFam" id="3.30.70.1560:FF:000001">
    <property type="entry name" value="Pseudouridine synthase"/>
    <property type="match status" value="1"/>
</dbReference>
<dbReference type="FunFam" id="3.30.70.580:FF:000009">
    <property type="entry name" value="Pseudouridine synthase"/>
    <property type="match status" value="1"/>
</dbReference>
<dbReference type="Gene3D" id="3.30.2350.10">
    <property type="entry name" value="Pseudouridine synthase"/>
    <property type="match status" value="1"/>
</dbReference>
<dbReference type="Gene3D" id="3.10.290.10">
    <property type="entry name" value="RNA-binding S4 domain"/>
    <property type="match status" value="1"/>
</dbReference>
<dbReference type="InterPro" id="IPR020103">
    <property type="entry name" value="PsdUridine_synth_cat_dom_sf"/>
</dbReference>
<dbReference type="InterPro" id="IPR006145">
    <property type="entry name" value="PsdUridine_synth_RsuA/RluA"/>
</dbReference>
<dbReference type="InterPro" id="IPR000748">
    <property type="entry name" value="PsdUridine_synth_RsuA/RluB/E/F"/>
</dbReference>
<dbReference type="InterPro" id="IPR018496">
    <property type="entry name" value="PsdUridine_synth_RsuA/RluB_CS"/>
</dbReference>
<dbReference type="InterPro" id="IPR050343">
    <property type="entry name" value="RsuA_PseudoU_synthase"/>
</dbReference>
<dbReference type="InterPro" id="IPR002942">
    <property type="entry name" value="S4_RNA-bd"/>
</dbReference>
<dbReference type="InterPro" id="IPR036986">
    <property type="entry name" value="S4_RNA-bd_sf"/>
</dbReference>
<dbReference type="NCBIfam" id="NF007976">
    <property type="entry name" value="PRK10700.1"/>
    <property type="match status" value="1"/>
</dbReference>
<dbReference type="NCBIfam" id="TIGR00093">
    <property type="entry name" value="pseudouridine synthase"/>
    <property type="match status" value="1"/>
</dbReference>
<dbReference type="PANTHER" id="PTHR47683">
    <property type="entry name" value="PSEUDOURIDINE SYNTHASE FAMILY PROTEIN-RELATED"/>
    <property type="match status" value="1"/>
</dbReference>
<dbReference type="PANTHER" id="PTHR47683:SF3">
    <property type="entry name" value="RIBOSOMAL LARGE SUBUNIT PSEUDOURIDINE SYNTHASE B"/>
    <property type="match status" value="1"/>
</dbReference>
<dbReference type="Pfam" id="PF00849">
    <property type="entry name" value="PseudoU_synth_2"/>
    <property type="match status" value="1"/>
</dbReference>
<dbReference type="Pfam" id="PF01479">
    <property type="entry name" value="S4"/>
    <property type="match status" value="1"/>
</dbReference>
<dbReference type="SMART" id="SM00363">
    <property type="entry name" value="S4"/>
    <property type="match status" value="1"/>
</dbReference>
<dbReference type="SUPFAM" id="SSF55174">
    <property type="entry name" value="Alpha-L RNA-binding motif"/>
    <property type="match status" value="1"/>
</dbReference>
<dbReference type="SUPFAM" id="SSF55120">
    <property type="entry name" value="Pseudouridine synthase"/>
    <property type="match status" value="1"/>
</dbReference>
<dbReference type="PROSITE" id="PS01149">
    <property type="entry name" value="PSI_RSU"/>
    <property type="match status" value="1"/>
</dbReference>
<dbReference type="PROSITE" id="PS50889">
    <property type="entry name" value="S4"/>
    <property type="match status" value="1"/>
</dbReference>
<reference key="1">
    <citation type="journal article" date="2001" name="Nature">
        <title>Complete genome sequence of a multiple drug resistant Salmonella enterica serovar Typhi CT18.</title>
        <authorList>
            <person name="Parkhill J."/>
            <person name="Dougan G."/>
            <person name="James K.D."/>
            <person name="Thomson N.R."/>
            <person name="Pickard D."/>
            <person name="Wain J."/>
            <person name="Churcher C.M."/>
            <person name="Mungall K.L."/>
            <person name="Bentley S.D."/>
            <person name="Holden M.T.G."/>
            <person name="Sebaihia M."/>
            <person name="Baker S."/>
            <person name="Basham D."/>
            <person name="Brooks K."/>
            <person name="Chillingworth T."/>
            <person name="Connerton P."/>
            <person name="Cronin A."/>
            <person name="Davis P."/>
            <person name="Davies R.M."/>
            <person name="Dowd L."/>
            <person name="White N."/>
            <person name="Farrar J."/>
            <person name="Feltwell T."/>
            <person name="Hamlin N."/>
            <person name="Haque A."/>
            <person name="Hien T.T."/>
            <person name="Holroyd S."/>
            <person name="Jagels K."/>
            <person name="Krogh A."/>
            <person name="Larsen T.S."/>
            <person name="Leather S."/>
            <person name="Moule S."/>
            <person name="O'Gaora P."/>
            <person name="Parry C."/>
            <person name="Quail M.A."/>
            <person name="Rutherford K.M."/>
            <person name="Simmonds M."/>
            <person name="Skelton J."/>
            <person name="Stevens K."/>
            <person name="Whitehead S."/>
            <person name="Barrell B.G."/>
        </authorList>
    </citation>
    <scope>NUCLEOTIDE SEQUENCE [LARGE SCALE GENOMIC DNA]</scope>
    <source>
        <strain>CT18</strain>
    </source>
</reference>
<reference key="2">
    <citation type="journal article" date="2003" name="J. Bacteriol.">
        <title>Comparative genomics of Salmonella enterica serovar Typhi strains Ty2 and CT18.</title>
        <authorList>
            <person name="Deng W."/>
            <person name="Liou S.-R."/>
            <person name="Plunkett G. III"/>
            <person name="Mayhew G.F."/>
            <person name="Rose D.J."/>
            <person name="Burland V."/>
            <person name="Kodoyianni V."/>
            <person name="Schwartz D.C."/>
            <person name="Blattner F.R."/>
        </authorList>
    </citation>
    <scope>NUCLEOTIDE SEQUENCE [LARGE SCALE GENOMIC DNA]</scope>
    <source>
        <strain>ATCC 700931 / Ty2</strain>
    </source>
</reference>
<protein>
    <recommendedName>
        <fullName>Ribosomal large subunit pseudouridine synthase B</fullName>
        <ecNumber>5.4.99.22</ecNumber>
    </recommendedName>
    <alternativeName>
        <fullName>23S rRNA pseudouridine(2605) synthase</fullName>
    </alternativeName>
    <alternativeName>
        <fullName>rRNA pseudouridylate synthase B</fullName>
    </alternativeName>
    <alternativeName>
        <fullName>rRNA-uridine isomerase B</fullName>
    </alternativeName>
</protein>